<protein>
    <recommendedName>
        <fullName evidence="1">Biotin synthase</fullName>
        <ecNumber evidence="1">2.8.1.6</ecNumber>
    </recommendedName>
</protein>
<feature type="chain" id="PRO_0000381179" description="Biotin synthase">
    <location>
        <begin position="1"/>
        <end position="350"/>
    </location>
</feature>
<feature type="domain" description="Radical SAM core" evidence="2">
    <location>
        <begin position="63"/>
        <end position="281"/>
    </location>
</feature>
<feature type="binding site" evidence="1">
    <location>
        <position position="78"/>
    </location>
    <ligand>
        <name>[4Fe-4S] cluster</name>
        <dbReference type="ChEBI" id="CHEBI:49883"/>
        <note>4Fe-4S-S-AdoMet</note>
    </ligand>
</feature>
<feature type="binding site" evidence="1">
    <location>
        <position position="82"/>
    </location>
    <ligand>
        <name>[4Fe-4S] cluster</name>
        <dbReference type="ChEBI" id="CHEBI:49883"/>
        <note>4Fe-4S-S-AdoMet</note>
    </ligand>
</feature>
<feature type="binding site" evidence="1">
    <location>
        <position position="85"/>
    </location>
    <ligand>
        <name>[4Fe-4S] cluster</name>
        <dbReference type="ChEBI" id="CHEBI:49883"/>
        <note>4Fe-4S-S-AdoMet</note>
    </ligand>
</feature>
<feature type="binding site" evidence="1">
    <location>
        <position position="122"/>
    </location>
    <ligand>
        <name>[2Fe-2S] cluster</name>
        <dbReference type="ChEBI" id="CHEBI:190135"/>
    </ligand>
</feature>
<feature type="binding site" evidence="1">
    <location>
        <position position="153"/>
    </location>
    <ligand>
        <name>[2Fe-2S] cluster</name>
        <dbReference type="ChEBI" id="CHEBI:190135"/>
    </ligand>
</feature>
<feature type="binding site" evidence="1">
    <location>
        <position position="213"/>
    </location>
    <ligand>
        <name>[2Fe-2S] cluster</name>
        <dbReference type="ChEBI" id="CHEBI:190135"/>
    </ligand>
</feature>
<feature type="binding site" evidence="1">
    <location>
        <position position="285"/>
    </location>
    <ligand>
        <name>[2Fe-2S] cluster</name>
        <dbReference type="ChEBI" id="CHEBI:190135"/>
    </ligand>
</feature>
<reference key="1">
    <citation type="submission" date="2006-12" db="EMBL/GenBank/DDBJ databases">
        <title>Complete sequence of chromosome 1 of Acidovorax sp. JS42.</title>
        <authorList>
            <person name="Copeland A."/>
            <person name="Lucas S."/>
            <person name="Lapidus A."/>
            <person name="Barry K."/>
            <person name="Detter J.C."/>
            <person name="Glavina del Rio T."/>
            <person name="Dalin E."/>
            <person name="Tice H."/>
            <person name="Pitluck S."/>
            <person name="Chertkov O."/>
            <person name="Brettin T."/>
            <person name="Bruce D."/>
            <person name="Han C."/>
            <person name="Tapia R."/>
            <person name="Gilna P."/>
            <person name="Schmutz J."/>
            <person name="Larimer F."/>
            <person name="Land M."/>
            <person name="Hauser L."/>
            <person name="Kyrpides N."/>
            <person name="Kim E."/>
            <person name="Stahl D."/>
            <person name="Richardson P."/>
        </authorList>
    </citation>
    <scope>NUCLEOTIDE SEQUENCE [LARGE SCALE GENOMIC DNA]</scope>
    <source>
        <strain>JS42</strain>
    </source>
</reference>
<accession>A1W7J6</accession>
<proteinExistence type="inferred from homology"/>
<name>BIOB_ACISJ</name>
<dbReference type="EC" id="2.8.1.6" evidence="1"/>
<dbReference type="EMBL" id="CP000539">
    <property type="protein sequence ID" value="ABM42221.1"/>
    <property type="molecule type" value="Genomic_DNA"/>
</dbReference>
<dbReference type="SMR" id="A1W7J6"/>
<dbReference type="STRING" id="232721.Ajs_2045"/>
<dbReference type="KEGG" id="ajs:Ajs_2045"/>
<dbReference type="eggNOG" id="COG0502">
    <property type="taxonomic scope" value="Bacteria"/>
</dbReference>
<dbReference type="HOGENOM" id="CLU_033172_1_2_4"/>
<dbReference type="UniPathway" id="UPA00078">
    <property type="reaction ID" value="UER00162"/>
</dbReference>
<dbReference type="Proteomes" id="UP000000645">
    <property type="component" value="Chromosome"/>
</dbReference>
<dbReference type="GO" id="GO:0051537">
    <property type="term" value="F:2 iron, 2 sulfur cluster binding"/>
    <property type="evidence" value="ECO:0007669"/>
    <property type="project" value="UniProtKB-KW"/>
</dbReference>
<dbReference type="GO" id="GO:0051539">
    <property type="term" value="F:4 iron, 4 sulfur cluster binding"/>
    <property type="evidence" value="ECO:0007669"/>
    <property type="project" value="UniProtKB-KW"/>
</dbReference>
<dbReference type="GO" id="GO:0004076">
    <property type="term" value="F:biotin synthase activity"/>
    <property type="evidence" value="ECO:0007669"/>
    <property type="project" value="UniProtKB-UniRule"/>
</dbReference>
<dbReference type="GO" id="GO:0005506">
    <property type="term" value="F:iron ion binding"/>
    <property type="evidence" value="ECO:0007669"/>
    <property type="project" value="UniProtKB-UniRule"/>
</dbReference>
<dbReference type="GO" id="GO:0009102">
    <property type="term" value="P:biotin biosynthetic process"/>
    <property type="evidence" value="ECO:0007669"/>
    <property type="project" value="UniProtKB-UniRule"/>
</dbReference>
<dbReference type="CDD" id="cd01335">
    <property type="entry name" value="Radical_SAM"/>
    <property type="match status" value="1"/>
</dbReference>
<dbReference type="FunFam" id="3.20.20.70:FF:000011">
    <property type="entry name" value="Biotin synthase"/>
    <property type="match status" value="1"/>
</dbReference>
<dbReference type="Gene3D" id="3.20.20.70">
    <property type="entry name" value="Aldolase class I"/>
    <property type="match status" value="1"/>
</dbReference>
<dbReference type="HAMAP" id="MF_01694">
    <property type="entry name" value="BioB"/>
    <property type="match status" value="1"/>
</dbReference>
<dbReference type="InterPro" id="IPR013785">
    <property type="entry name" value="Aldolase_TIM"/>
</dbReference>
<dbReference type="InterPro" id="IPR010722">
    <property type="entry name" value="BATS_dom"/>
</dbReference>
<dbReference type="InterPro" id="IPR002684">
    <property type="entry name" value="Biotin_synth/BioAB"/>
</dbReference>
<dbReference type="InterPro" id="IPR024177">
    <property type="entry name" value="Biotin_synthase"/>
</dbReference>
<dbReference type="InterPro" id="IPR006638">
    <property type="entry name" value="Elp3/MiaA/NifB-like_rSAM"/>
</dbReference>
<dbReference type="InterPro" id="IPR007197">
    <property type="entry name" value="rSAM"/>
</dbReference>
<dbReference type="NCBIfam" id="TIGR00433">
    <property type="entry name" value="bioB"/>
    <property type="match status" value="1"/>
</dbReference>
<dbReference type="PANTHER" id="PTHR22976">
    <property type="entry name" value="BIOTIN SYNTHASE"/>
    <property type="match status" value="1"/>
</dbReference>
<dbReference type="PANTHER" id="PTHR22976:SF2">
    <property type="entry name" value="BIOTIN SYNTHASE, MITOCHONDRIAL"/>
    <property type="match status" value="1"/>
</dbReference>
<dbReference type="Pfam" id="PF06968">
    <property type="entry name" value="BATS"/>
    <property type="match status" value="1"/>
</dbReference>
<dbReference type="Pfam" id="PF04055">
    <property type="entry name" value="Radical_SAM"/>
    <property type="match status" value="1"/>
</dbReference>
<dbReference type="PIRSF" id="PIRSF001619">
    <property type="entry name" value="Biotin_synth"/>
    <property type="match status" value="1"/>
</dbReference>
<dbReference type="SFLD" id="SFLDF00272">
    <property type="entry name" value="biotin_synthase"/>
    <property type="match status" value="1"/>
</dbReference>
<dbReference type="SFLD" id="SFLDS00029">
    <property type="entry name" value="Radical_SAM"/>
    <property type="match status" value="1"/>
</dbReference>
<dbReference type="SMART" id="SM00876">
    <property type="entry name" value="BATS"/>
    <property type="match status" value="1"/>
</dbReference>
<dbReference type="SMART" id="SM00729">
    <property type="entry name" value="Elp3"/>
    <property type="match status" value="1"/>
</dbReference>
<dbReference type="SUPFAM" id="SSF102114">
    <property type="entry name" value="Radical SAM enzymes"/>
    <property type="match status" value="1"/>
</dbReference>
<dbReference type="PROSITE" id="PS51918">
    <property type="entry name" value="RADICAL_SAM"/>
    <property type="match status" value="1"/>
</dbReference>
<keyword id="KW-0001">2Fe-2S</keyword>
<keyword id="KW-0004">4Fe-4S</keyword>
<keyword id="KW-0093">Biotin biosynthesis</keyword>
<keyword id="KW-0408">Iron</keyword>
<keyword id="KW-0411">Iron-sulfur</keyword>
<keyword id="KW-0479">Metal-binding</keyword>
<keyword id="KW-0949">S-adenosyl-L-methionine</keyword>
<keyword id="KW-0808">Transferase</keyword>
<sequence length="350" mass="37683">MTSATTAPHTTQTLQFHPRVAESVATQRGEGWSIQAVQELLDLPFMELLWRAQATHRTHWPQGDIELATLLSVKTGGCPENCGYCPQSAEFDTGVKAEKLMNVQEVTQAAQAAKDAGATRFCMGAAWRAPKDRDIEKISELITAVKDLGLQTCATLGMLQSHQAQALKDAGLDYYNHNLDTAPEYYSDVVSTRQYQDRLDTLRHVRDAGINVCCGGIVGMGEAPVHRAGLIAQLANLNPYPESVPINSLVRVAGTPLADSEPVDPLDFVRVIAVARITMPKARVRLSAGRQQLGDAVQALCFLAGANSIFYGDKLLVTGNPDVEADTQLLAKLGLKGTPNQTTTETACGA</sequence>
<gene>
    <name evidence="1" type="primary">bioB</name>
    <name type="ordered locus">Ajs_2045</name>
</gene>
<organism>
    <name type="scientific">Acidovorax sp. (strain JS42)</name>
    <dbReference type="NCBI Taxonomy" id="232721"/>
    <lineage>
        <taxon>Bacteria</taxon>
        <taxon>Pseudomonadati</taxon>
        <taxon>Pseudomonadota</taxon>
        <taxon>Betaproteobacteria</taxon>
        <taxon>Burkholderiales</taxon>
        <taxon>Comamonadaceae</taxon>
        <taxon>Acidovorax</taxon>
    </lineage>
</organism>
<evidence type="ECO:0000255" key="1">
    <source>
        <dbReference type="HAMAP-Rule" id="MF_01694"/>
    </source>
</evidence>
<evidence type="ECO:0000255" key="2">
    <source>
        <dbReference type="PROSITE-ProRule" id="PRU01266"/>
    </source>
</evidence>
<comment type="function">
    <text evidence="1">Catalyzes the conversion of dethiobiotin (DTB) to biotin by the insertion of a sulfur atom into dethiobiotin via a radical-based mechanism.</text>
</comment>
<comment type="catalytic activity">
    <reaction evidence="1">
        <text>(4R,5S)-dethiobiotin + (sulfur carrier)-SH + 2 reduced [2Fe-2S]-[ferredoxin] + 2 S-adenosyl-L-methionine = (sulfur carrier)-H + biotin + 2 5'-deoxyadenosine + 2 L-methionine + 2 oxidized [2Fe-2S]-[ferredoxin]</text>
        <dbReference type="Rhea" id="RHEA:22060"/>
        <dbReference type="Rhea" id="RHEA-COMP:10000"/>
        <dbReference type="Rhea" id="RHEA-COMP:10001"/>
        <dbReference type="Rhea" id="RHEA-COMP:14737"/>
        <dbReference type="Rhea" id="RHEA-COMP:14739"/>
        <dbReference type="ChEBI" id="CHEBI:17319"/>
        <dbReference type="ChEBI" id="CHEBI:29917"/>
        <dbReference type="ChEBI" id="CHEBI:33737"/>
        <dbReference type="ChEBI" id="CHEBI:33738"/>
        <dbReference type="ChEBI" id="CHEBI:57586"/>
        <dbReference type="ChEBI" id="CHEBI:57844"/>
        <dbReference type="ChEBI" id="CHEBI:59789"/>
        <dbReference type="ChEBI" id="CHEBI:64428"/>
        <dbReference type="ChEBI" id="CHEBI:149473"/>
        <dbReference type="EC" id="2.8.1.6"/>
    </reaction>
</comment>
<comment type="cofactor">
    <cofactor evidence="1">
        <name>[4Fe-4S] cluster</name>
        <dbReference type="ChEBI" id="CHEBI:49883"/>
    </cofactor>
    <text evidence="1">Binds 1 [4Fe-4S] cluster. The cluster is coordinated with 3 cysteines and an exchangeable S-adenosyl-L-methionine.</text>
</comment>
<comment type="cofactor">
    <cofactor evidence="1">
        <name>[2Fe-2S] cluster</name>
        <dbReference type="ChEBI" id="CHEBI:190135"/>
    </cofactor>
    <text evidence="1">Binds 1 [2Fe-2S] cluster. The cluster is coordinated with 3 cysteines and 1 arginine.</text>
</comment>
<comment type="pathway">
    <text evidence="1">Cofactor biosynthesis; biotin biosynthesis; biotin from 7,8-diaminononanoate: step 2/2.</text>
</comment>
<comment type="subunit">
    <text evidence="1">Homodimer.</text>
</comment>
<comment type="similarity">
    <text evidence="1">Belongs to the radical SAM superfamily. Biotin synthase family.</text>
</comment>